<organism>
    <name type="scientific">Cytophaga hutchinsonii (strain ATCC 33406 / DSM 1761 / CIP 103989 / NBRC 15051 / NCIMB 9469 / D465)</name>
    <dbReference type="NCBI Taxonomy" id="269798"/>
    <lineage>
        <taxon>Bacteria</taxon>
        <taxon>Pseudomonadati</taxon>
        <taxon>Bacteroidota</taxon>
        <taxon>Cytophagia</taxon>
        <taxon>Cytophagales</taxon>
        <taxon>Cytophagaceae</taxon>
        <taxon>Cytophaga</taxon>
    </lineage>
</organism>
<name>PAND_CYTH3</name>
<evidence type="ECO:0000255" key="1">
    <source>
        <dbReference type="HAMAP-Rule" id="MF_00446"/>
    </source>
</evidence>
<accession>Q11NE7</accession>
<feature type="chain" id="PRO_0000306961" description="Aspartate 1-decarboxylase beta chain" evidence="1">
    <location>
        <begin position="1"/>
        <end position="24"/>
    </location>
</feature>
<feature type="chain" id="PRO_0000306962" description="Aspartate 1-decarboxylase alpha chain" evidence="1">
    <location>
        <begin position="25"/>
        <end position="115"/>
    </location>
</feature>
<feature type="active site" description="Schiff-base intermediate with substrate; via pyruvic acid" evidence="1">
    <location>
        <position position="25"/>
    </location>
</feature>
<feature type="active site" description="Proton donor" evidence="1">
    <location>
        <position position="58"/>
    </location>
</feature>
<feature type="binding site" evidence="1">
    <location>
        <position position="57"/>
    </location>
    <ligand>
        <name>substrate</name>
    </ligand>
</feature>
<feature type="binding site" evidence="1">
    <location>
        <begin position="73"/>
        <end position="75"/>
    </location>
    <ligand>
        <name>substrate</name>
    </ligand>
</feature>
<feature type="modified residue" description="Pyruvic acid (Ser)" evidence="1">
    <location>
        <position position="25"/>
    </location>
</feature>
<keyword id="KW-0068">Autocatalytic cleavage</keyword>
<keyword id="KW-0963">Cytoplasm</keyword>
<keyword id="KW-0210">Decarboxylase</keyword>
<keyword id="KW-0456">Lyase</keyword>
<keyword id="KW-0566">Pantothenate biosynthesis</keyword>
<keyword id="KW-0670">Pyruvate</keyword>
<keyword id="KW-1185">Reference proteome</keyword>
<keyword id="KW-0704">Schiff base</keyword>
<keyword id="KW-0865">Zymogen</keyword>
<comment type="function">
    <text evidence="1">Catalyzes the pyruvoyl-dependent decarboxylation of aspartate to produce beta-alanine.</text>
</comment>
<comment type="catalytic activity">
    <reaction evidence="1">
        <text>L-aspartate + H(+) = beta-alanine + CO2</text>
        <dbReference type="Rhea" id="RHEA:19497"/>
        <dbReference type="ChEBI" id="CHEBI:15378"/>
        <dbReference type="ChEBI" id="CHEBI:16526"/>
        <dbReference type="ChEBI" id="CHEBI:29991"/>
        <dbReference type="ChEBI" id="CHEBI:57966"/>
        <dbReference type="EC" id="4.1.1.11"/>
    </reaction>
</comment>
<comment type="cofactor">
    <cofactor evidence="1">
        <name>pyruvate</name>
        <dbReference type="ChEBI" id="CHEBI:15361"/>
    </cofactor>
    <text evidence="1">Binds 1 pyruvoyl group covalently per subunit.</text>
</comment>
<comment type="pathway">
    <text evidence="1">Cofactor biosynthesis; (R)-pantothenate biosynthesis; beta-alanine from L-aspartate: step 1/1.</text>
</comment>
<comment type="subunit">
    <text evidence="1">Heterooctamer of four alpha and four beta subunits.</text>
</comment>
<comment type="subcellular location">
    <subcellularLocation>
        <location evidence="1">Cytoplasm</location>
    </subcellularLocation>
</comment>
<comment type="PTM">
    <text evidence="1">Is synthesized initially as an inactive proenzyme, which is activated by self-cleavage at a specific serine bond to produce a beta-subunit with a hydroxyl group at its C-terminus and an alpha-subunit with a pyruvoyl group at its N-terminus.</text>
</comment>
<comment type="similarity">
    <text evidence="1">Belongs to the PanD family.</text>
</comment>
<sequence length="115" mass="12855">MNIEVLKSKIHRVKVTQAELHYVGSITIDEALMEASNIIENEKVQIVNINNGERFETYVIKGEKNTGVICLNGPAARKVAVGDIVIVIAYASMDFEEAKKWKPTLIFPDANNRLI</sequence>
<dbReference type="EC" id="4.1.1.11" evidence="1"/>
<dbReference type="EMBL" id="CP000383">
    <property type="protein sequence ID" value="ABG61066.1"/>
    <property type="molecule type" value="Genomic_DNA"/>
</dbReference>
<dbReference type="RefSeq" id="WP_011587171.1">
    <property type="nucleotide sequence ID" value="NC_008255.1"/>
</dbReference>
<dbReference type="SMR" id="Q11NE7"/>
<dbReference type="STRING" id="269798.CHU_3834"/>
<dbReference type="KEGG" id="chu:CHU_3834"/>
<dbReference type="eggNOG" id="COG0853">
    <property type="taxonomic scope" value="Bacteria"/>
</dbReference>
<dbReference type="HOGENOM" id="CLU_115305_2_0_10"/>
<dbReference type="OrthoDB" id="9803983at2"/>
<dbReference type="UniPathway" id="UPA00028">
    <property type="reaction ID" value="UER00002"/>
</dbReference>
<dbReference type="Proteomes" id="UP000001822">
    <property type="component" value="Chromosome"/>
</dbReference>
<dbReference type="GO" id="GO:0005829">
    <property type="term" value="C:cytosol"/>
    <property type="evidence" value="ECO:0007669"/>
    <property type="project" value="TreeGrafter"/>
</dbReference>
<dbReference type="GO" id="GO:0004068">
    <property type="term" value="F:aspartate 1-decarboxylase activity"/>
    <property type="evidence" value="ECO:0007669"/>
    <property type="project" value="UniProtKB-UniRule"/>
</dbReference>
<dbReference type="GO" id="GO:0006523">
    <property type="term" value="P:alanine biosynthetic process"/>
    <property type="evidence" value="ECO:0007669"/>
    <property type="project" value="InterPro"/>
</dbReference>
<dbReference type="GO" id="GO:0015940">
    <property type="term" value="P:pantothenate biosynthetic process"/>
    <property type="evidence" value="ECO:0007669"/>
    <property type="project" value="UniProtKB-UniRule"/>
</dbReference>
<dbReference type="CDD" id="cd06919">
    <property type="entry name" value="Asp_decarbox"/>
    <property type="match status" value="1"/>
</dbReference>
<dbReference type="Gene3D" id="2.40.40.20">
    <property type="match status" value="1"/>
</dbReference>
<dbReference type="HAMAP" id="MF_00446">
    <property type="entry name" value="PanD"/>
    <property type="match status" value="1"/>
</dbReference>
<dbReference type="InterPro" id="IPR009010">
    <property type="entry name" value="Asp_de-COase-like_dom_sf"/>
</dbReference>
<dbReference type="InterPro" id="IPR003190">
    <property type="entry name" value="Asp_decarbox"/>
</dbReference>
<dbReference type="NCBIfam" id="TIGR00223">
    <property type="entry name" value="panD"/>
    <property type="match status" value="1"/>
</dbReference>
<dbReference type="PANTHER" id="PTHR21012">
    <property type="entry name" value="ASPARTATE 1-DECARBOXYLASE"/>
    <property type="match status" value="1"/>
</dbReference>
<dbReference type="PANTHER" id="PTHR21012:SF0">
    <property type="entry name" value="ASPARTATE 1-DECARBOXYLASE"/>
    <property type="match status" value="1"/>
</dbReference>
<dbReference type="Pfam" id="PF02261">
    <property type="entry name" value="Asp_decarbox"/>
    <property type="match status" value="1"/>
</dbReference>
<dbReference type="PIRSF" id="PIRSF006246">
    <property type="entry name" value="Asp_decarbox"/>
    <property type="match status" value="1"/>
</dbReference>
<dbReference type="SUPFAM" id="SSF50692">
    <property type="entry name" value="ADC-like"/>
    <property type="match status" value="1"/>
</dbReference>
<reference key="1">
    <citation type="journal article" date="2007" name="Appl. Environ. Microbiol.">
        <title>Genome sequence of the cellulolytic gliding bacterium Cytophaga hutchinsonii.</title>
        <authorList>
            <person name="Xie G."/>
            <person name="Bruce D.C."/>
            <person name="Challacombe J.F."/>
            <person name="Chertkov O."/>
            <person name="Detter J.C."/>
            <person name="Gilna P."/>
            <person name="Han C.S."/>
            <person name="Lucas S."/>
            <person name="Misra M."/>
            <person name="Myers G.L."/>
            <person name="Richardson P."/>
            <person name="Tapia R."/>
            <person name="Thayer N."/>
            <person name="Thompson L.S."/>
            <person name="Brettin T.S."/>
            <person name="Henrissat B."/>
            <person name="Wilson D.B."/>
            <person name="McBride M.J."/>
        </authorList>
    </citation>
    <scope>NUCLEOTIDE SEQUENCE [LARGE SCALE GENOMIC DNA]</scope>
    <source>
        <strain>ATCC 33406 / DSM 1761 / JCM 20678 / CIP 103989 / IAM 12607 / NBRC 15051 / NCIMB 9469 / D465</strain>
    </source>
</reference>
<gene>
    <name evidence="1" type="primary">panD</name>
    <name type="ordered locus">CHU_3834</name>
</gene>
<protein>
    <recommendedName>
        <fullName evidence="1">Aspartate 1-decarboxylase</fullName>
        <ecNumber evidence="1">4.1.1.11</ecNumber>
    </recommendedName>
    <alternativeName>
        <fullName evidence="1">Aspartate alpha-decarboxylase</fullName>
    </alternativeName>
    <component>
        <recommendedName>
            <fullName evidence="1">Aspartate 1-decarboxylase beta chain</fullName>
        </recommendedName>
    </component>
    <component>
        <recommendedName>
            <fullName evidence="1">Aspartate 1-decarboxylase alpha chain</fullName>
        </recommendedName>
    </component>
</protein>
<proteinExistence type="inferred from homology"/>